<gene>
    <name type="primary">OPG081</name>
    <name type="ORF">I5L</name>
</gene>
<accession>P20500</accession>
<keyword id="KW-0426">Late protein</keyword>
<keyword id="KW-0472">Membrane</keyword>
<keyword id="KW-1185">Reference proteome</keyword>
<keyword id="KW-0812">Transmembrane</keyword>
<keyword id="KW-1133">Transmembrane helix</keyword>
<keyword id="KW-0261">Viral envelope protein</keyword>
<keyword id="KW-0946">Virion</keyword>
<proteinExistence type="inferred from homology"/>
<protein>
    <recommendedName>
        <fullName>Protein OPG081</fullName>
    </recommendedName>
    <alternativeName>
        <fullName>Protein I5</fullName>
    </alternativeName>
</protein>
<comment type="function">
    <text evidence="1">Envelope protein.</text>
</comment>
<comment type="subcellular location">
    <subcellularLocation>
        <location evidence="1">Virion membrane</location>
        <topology evidence="1">Multi-pass membrane protein</topology>
    </subcellularLocation>
    <text evidence="1">Probably localizes to the membrane of mature virions (MV).</text>
</comment>
<comment type="induction">
    <text evidence="1">Expressed in the intermediate phase of the viral replicative cycle.</text>
</comment>
<comment type="similarity">
    <text evidence="3">Belongs to the orthopoxvirus OPG081 family.</text>
</comment>
<dbReference type="EMBL" id="M35027">
    <property type="protein sequence ID" value="AAA48061.1"/>
    <property type="molecule type" value="Genomic_DNA"/>
</dbReference>
<dbReference type="PIR" id="A42511">
    <property type="entry name" value="A42511"/>
</dbReference>
<dbReference type="Proteomes" id="UP000008269">
    <property type="component" value="Segment"/>
</dbReference>
<dbReference type="GO" id="GO:0016020">
    <property type="term" value="C:membrane"/>
    <property type="evidence" value="ECO:0007669"/>
    <property type="project" value="UniProtKB-KW"/>
</dbReference>
<dbReference type="GO" id="GO:0019031">
    <property type="term" value="C:viral envelope"/>
    <property type="evidence" value="ECO:0007669"/>
    <property type="project" value="UniProtKB-KW"/>
</dbReference>
<dbReference type="GO" id="GO:0055036">
    <property type="term" value="C:virion membrane"/>
    <property type="evidence" value="ECO:0007669"/>
    <property type="project" value="UniProtKB-SubCell"/>
</dbReference>
<dbReference type="InterPro" id="IPR006803">
    <property type="entry name" value="Poxvirus_I5"/>
</dbReference>
<dbReference type="Pfam" id="PF04713">
    <property type="entry name" value="Pox_I5"/>
    <property type="match status" value="1"/>
</dbReference>
<dbReference type="PIRSF" id="PIRSF003768">
    <property type="entry name" value="VAC_I5L"/>
    <property type="match status" value="1"/>
</dbReference>
<organism>
    <name type="scientific">Vaccinia virus (strain Copenhagen)</name>
    <name type="common">VACV</name>
    <dbReference type="NCBI Taxonomy" id="10249"/>
    <lineage>
        <taxon>Viruses</taxon>
        <taxon>Varidnaviria</taxon>
        <taxon>Bamfordvirae</taxon>
        <taxon>Nucleocytoviricota</taxon>
        <taxon>Pokkesviricetes</taxon>
        <taxon>Chitovirales</taxon>
        <taxon>Poxviridae</taxon>
        <taxon>Chordopoxvirinae</taxon>
        <taxon>Orthopoxvirus</taxon>
        <taxon>Vaccinia virus</taxon>
    </lineage>
</organism>
<feature type="chain" id="PRO_0000099575" description="Protein OPG081">
    <location>
        <begin position="1"/>
        <end position="79"/>
    </location>
</feature>
<feature type="topological domain" description="Intravirion" evidence="2">
    <location>
        <begin position="1"/>
        <end position="8"/>
    </location>
</feature>
<feature type="transmembrane region" description="Helical" evidence="2">
    <location>
        <begin position="9"/>
        <end position="29"/>
    </location>
</feature>
<feature type="topological domain" description="Virion surface" evidence="2">
    <location>
        <begin position="30"/>
        <end position="47"/>
    </location>
</feature>
<feature type="transmembrane region" description="Helical" evidence="2">
    <location>
        <begin position="48"/>
        <end position="68"/>
    </location>
</feature>
<feature type="topological domain" description="Intravirion" evidence="2">
    <location>
        <begin position="69"/>
        <end position="79"/>
    </location>
</feature>
<name>PG081_VACCC</name>
<evidence type="ECO:0000250" key="1">
    <source>
        <dbReference type="UniProtKB" id="P12924"/>
    </source>
</evidence>
<evidence type="ECO:0000255" key="2"/>
<evidence type="ECO:0000305" key="3"/>
<sequence>MVDAITVLTAIGITVLMLLMVISGAAMIVKELNPNDIFTMQSLKFNRAVTIFKYIGLFIYIPGTIILYATYVKSLLMKS</sequence>
<reference key="1">
    <citation type="journal article" date="1990" name="Virology">
        <title>The complete DNA sequence of vaccinia virus.</title>
        <authorList>
            <person name="Goebel S.J."/>
            <person name="Johnson G.P."/>
            <person name="Perkus M.E."/>
            <person name="Davis S.W."/>
            <person name="Winslow J.P."/>
            <person name="Paoletti E."/>
        </authorList>
    </citation>
    <scope>NUCLEOTIDE SEQUENCE [LARGE SCALE GENOMIC DNA]</scope>
</reference>
<reference key="2">
    <citation type="journal article" date="1990" name="Virology">
        <title>Appendix to 'The complete DNA sequence of vaccinia virus'.</title>
        <authorList>
            <person name="Goebel S.J."/>
            <person name="Johnson G.P."/>
            <person name="Perkus M.E."/>
            <person name="Davis S.W."/>
            <person name="Winslow J.P."/>
            <person name="Paoletti E."/>
        </authorList>
    </citation>
    <scope>NUCLEOTIDE SEQUENCE [LARGE SCALE GENOMIC DNA]</scope>
</reference>
<organismHost>
    <name type="scientific">Homo sapiens</name>
    <name type="common">Human</name>
    <dbReference type="NCBI Taxonomy" id="9606"/>
</organismHost>